<name>GLGX_SALDC</name>
<sequence>MTQLAIGEATPHGATYDGHGVNFTLFSAHAERVELCVFDSRGNERRYDLPGRRGDVWHGYLAGARPGLRYGYRVHGPWQPAQGHRFNPAKLLLDPYARRVEGELKDHPLLHGGHDEPDYRDNAAVAPKSVVISDHYDWEDDAAPRTPWGKTVIYEAHVKGLTYLHPELPQEIRGTYKALGHPVMVAYFKQLGITALELLPVAQFASEPRLQRMGLTNYWGYNPMAMFALHPAWASSPEMALDEFRDAVKALHRAGIEVILDIVLNHSAELDLDGPTFSLRGIDNRSYYWIRDDGDYHNWTGCGNTLNLSHPGVVEYACECLRYWVETCHVDGFRFDLASVMGRTPTFRQDAPLFAAIKACPVLSTVKLIAEPWDIGEGGYQVGNFPPPFAEWNDHFRDAARRFWLPRNLTTGEFACRFAASSDVFKRNGRAPGASVNLLTAHDGFTLRDCVCFNQKHNEANGEENRDGTNSNYSDNHGKEGLGGPLDLMERRRDSIHALLATLLLSQGTPMLLAGDEHGHSQHGNNNAYCQDNALTWLDWQQANRGLTTFTAALIRLRQQIPALTGNSWWEEGDGNVRWLNKNAQPLSADEWQNGPKLMQILLSDRFLIAINATLEVTDIVLPEGEWRAVPPFAGEDNPVITAVWQGPAHGLCVFQRG</sequence>
<feature type="chain" id="PRO_1000139873" description="Glycogen debranching enzyme">
    <location>
        <begin position="1"/>
        <end position="658"/>
    </location>
</feature>
<feature type="region of interest" description="Disordered" evidence="2">
    <location>
        <begin position="459"/>
        <end position="484"/>
    </location>
</feature>
<feature type="active site" description="Nucleophile" evidence="1">
    <location>
        <position position="336"/>
    </location>
</feature>
<feature type="active site" description="Proton donor" evidence="1">
    <location>
        <position position="371"/>
    </location>
</feature>
<feature type="site" description="Transition state stabilizer" evidence="1">
    <location>
        <position position="443"/>
    </location>
</feature>
<proteinExistence type="inferred from homology"/>
<reference key="1">
    <citation type="journal article" date="2011" name="J. Bacteriol.">
        <title>Comparative genomics of 28 Salmonella enterica isolates: evidence for CRISPR-mediated adaptive sublineage evolution.</title>
        <authorList>
            <person name="Fricke W.F."/>
            <person name="Mammel M.K."/>
            <person name="McDermott P.F."/>
            <person name="Tartera C."/>
            <person name="White D.G."/>
            <person name="Leclerc J.E."/>
            <person name="Ravel J."/>
            <person name="Cebula T.A."/>
        </authorList>
    </citation>
    <scope>NUCLEOTIDE SEQUENCE [LARGE SCALE GENOMIC DNA]</scope>
    <source>
        <strain>CT_02021853</strain>
    </source>
</reference>
<gene>
    <name evidence="1" type="primary">glgX</name>
    <name type="ordered locus">SeD_A3907</name>
</gene>
<accession>B5FKF6</accession>
<protein>
    <recommendedName>
        <fullName evidence="1">Glycogen debranching enzyme</fullName>
        <ecNumber evidence="1">3.2.1.196</ecNumber>
    </recommendedName>
    <alternativeName>
        <fullName evidence="1">Limit dextrin alpha-1,6-maltotetraose-hydrolase</fullName>
    </alternativeName>
</protein>
<dbReference type="EC" id="3.2.1.196" evidence="1"/>
<dbReference type="EMBL" id="CP001144">
    <property type="protein sequence ID" value="ACH74742.1"/>
    <property type="molecule type" value="Genomic_DNA"/>
</dbReference>
<dbReference type="RefSeq" id="WP_000192485.1">
    <property type="nucleotide sequence ID" value="NC_011205.1"/>
</dbReference>
<dbReference type="SMR" id="B5FKF6"/>
<dbReference type="CAZy" id="CBM48">
    <property type="family name" value="Carbohydrate-Binding Module Family 48"/>
</dbReference>
<dbReference type="CAZy" id="GH13">
    <property type="family name" value="Glycoside Hydrolase Family 13"/>
</dbReference>
<dbReference type="KEGG" id="sed:SeD_A3907"/>
<dbReference type="HOGENOM" id="CLU_011725_1_1_6"/>
<dbReference type="UniPathway" id="UPA00165"/>
<dbReference type="Proteomes" id="UP000008322">
    <property type="component" value="Chromosome"/>
</dbReference>
<dbReference type="GO" id="GO:0004133">
    <property type="term" value="F:glycogen debranching enzyme activity"/>
    <property type="evidence" value="ECO:0007669"/>
    <property type="project" value="UniProtKB-UniRule"/>
</dbReference>
<dbReference type="GO" id="GO:0004553">
    <property type="term" value="F:hydrolase activity, hydrolyzing O-glycosyl compounds"/>
    <property type="evidence" value="ECO:0007669"/>
    <property type="project" value="InterPro"/>
</dbReference>
<dbReference type="GO" id="GO:0005980">
    <property type="term" value="P:glycogen catabolic process"/>
    <property type="evidence" value="ECO:0007669"/>
    <property type="project" value="UniProtKB-UniRule"/>
</dbReference>
<dbReference type="CDD" id="cd11326">
    <property type="entry name" value="AmyAc_Glg_debranch"/>
    <property type="match status" value="1"/>
</dbReference>
<dbReference type="CDD" id="cd02856">
    <property type="entry name" value="E_set_GDE_Isoamylase_N"/>
    <property type="match status" value="1"/>
</dbReference>
<dbReference type="FunFam" id="2.60.40.10:FF:000468">
    <property type="entry name" value="Glycogen debranching enzyme"/>
    <property type="match status" value="1"/>
</dbReference>
<dbReference type="Gene3D" id="3.20.20.80">
    <property type="entry name" value="Glycosidases"/>
    <property type="match status" value="1"/>
</dbReference>
<dbReference type="Gene3D" id="2.60.40.1180">
    <property type="entry name" value="Golgi alpha-mannosidase II"/>
    <property type="match status" value="1"/>
</dbReference>
<dbReference type="Gene3D" id="2.60.40.10">
    <property type="entry name" value="Immunoglobulins"/>
    <property type="match status" value="1"/>
</dbReference>
<dbReference type="HAMAP" id="MF_01248">
    <property type="entry name" value="GlgX"/>
    <property type="match status" value="1"/>
</dbReference>
<dbReference type="InterPro" id="IPR040784">
    <property type="entry name" value="GlgX_C"/>
</dbReference>
<dbReference type="InterPro" id="IPR044505">
    <property type="entry name" value="GlgX_Isoamylase_N_E_set"/>
</dbReference>
<dbReference type="InterPro" id="IPR006047">
    <property type="entry name" value="Glyco_hydro_13_cat_dom"/>
</dbReference>
<dbReference type="InterPro" id="IPR004193">
    <property type="entry name" value="Glyco_hydro_13_N"/>
</dbReference>
<dbReference type="InterPro" id="IPR013780">
    <property type="entry name" value="Glyco_hydro_b"/>
</dbReference>
<dbReference type="InterPro" id="IPR022844">
    <property type="entry name" value="Glycogen_debranch_bac"/>
</dbReference>
<dbReference type="InterPro" id="IPR011837">
    <property type="entry name" value="Glycogen_debranch_GlgX"/>
</dbReference>
<dbReference type="InterPro" id="IPR017853">
    <property type="entry name" value="Glycoside_hydrolase_SF"/>
</dbReference>
<dbReference type="InterPro" id="IPR013783">
    <property type="entry name" value="Ig-like_fold"/>
</dbReference>
<dbReference type="InterPro" id="IPR014756">
    <property type="entry name" value="Ig_E-set"/>
</dbReference>
<dbReference type="NCBIfam" id="TIGR02100">
    <property type="entry name" value="glgX_debranch"/>
    <property type="match status" value="1"/>
</dbReference>
<dbReference type="NCBIfam" id="NF002983">
    <property type="entry name" value="PRK03705.1"/>
    <property type="match status" value="1"/>
</dbReference>
<dbReference type="PANTHER" id="PTHR43002">
    <property type="entry name" value="GLYCOGEN DEBRANCHING ENZYME"/>
    <property type="match status" value="1"/>
</dbReference>
<dbReference type="Pfam" id="PF00128">
    <property type="entry name" value="Alpha-amylase"/>
    <property type="match status" value="1"/>
</dbReference>
<dbReference type="Pfam" id="PF02922">
    <property type="entry name" value="CBM_48"/>
    <property type="match status" value="1"/>
</dbReference>
<dbReference type="Pfam" id="PF18390">
    <property type="entry name" value="GlgX_C"/>
    <property type="match status" value="1"/>
</dbReference>
<dbReference type="SMART" id="SM00642">
    <property type="entry name" value="Aamy"/>
    <property type="match status" value="1"/>
</dbReference>
<dbReference type="SUPFAM" id="SSF51445">
    <property type="entry name" value="(Trans)glycosidases"/>
    <property type="match status" value="1"/>
</dbReference>
<dbReference type="SUPFAM" id="SSF81296">
    <property type="entry name" value="E set domains"/>
    <property type="match status" value="1"/>
</dbReference>
<keyword id="KW-0119">Carbohydrate metabolism</keyword>
<keyword id="KW-0321">Glycogen metabolism</keyword>
<keyword id="KW-0326">Glycosidase</keyword>
<keyword id="KW-0378">Hydrolase</keyword>
<evidence type="ECO:0000255" key="1">
    <source>
        <dbReference type="HAMAP-Rule" id="MF_01248"/>
    </source>
</evidence>
<evidence type="ECO:0000256" key="2">
    <source>
        <dbReference type="SAM" id="MobiDB-lite"/>
    </source>
</evidence>
<comment type="function">
    <text evidence="1">Removes maltotriose and maltotetraose chains that are attached by 1,6-alpha-linkage to the limit dextrin main chain, generating a debranched limit dextrin.</text>
</comment>
<comment type="catalytic activity">
    <reaction evidence="1">
        <text>Hydrolysis of (1-&gt;6)-alpha-D-glucosidic linkages to branches with degrees of polymerization of three or four glucose residues in limit dextrin.</text>
        <dbReference type="EC" id="3.2.1.196"/>
    </reaction>
</comment>
<comment type="pathway">
    <text evidence="1">Glycan degradation; glycogen degradation.</text>
</comment>
<comment type="similarity">
    <text evidence="1">Belongs to the glycosyl hydrolase 13 family.</text>
</comment>
<organism>
    <name type="scientific">Salmonella dublin (strain CT_02021853)</name>
    <dbReference type="NCBI Taxonomy" id="439851"/>
    <lineage>
        <taxon>Bacteria</taxon>
        <taxon>Pseudomonadati</taxon>
        <taxon>Pseudomonadota</taxon>
        <taxon>Gammaproteobacteria</taxon>
        <taxon>Enterobacterales</taxon>
        <taxon>Enterobacteriaceae</taxon>
        <taxon>Salmonella</taxon>
    </lineage>
</organism>